<keyword id="KW-1015">Disulfide bond</keyword>
<keyword id="KW-0325">Glycoprotein</keyword>
<keyword id="KW-1032">Host cell membrane</keyword>
<keyword id="KW-1039">Host endosome</keyword>
<keyword id="KW-1040">Host Golgi apparatus</keyword>
<keyword id="KW-1043">Host membrane</keyword>
<keyword id="KW-0945">Host-virus interaction</keyword>
<keyword id="KW-0472">Membrane</keyword>
<keyword id="KW-0732">Signal</keyword>
<keyword id="KW-0812">Transmembrane</keyword>
<keyword id="KW-1133">Transmembrane helix</keyword>
<keyword id="KW-1161">Viral attachment to host cell</keyword>
<keyword id="KW-0261">Viral envelope protein</keyword>
<keyword id="KW-0946">Virion</keyword>
<keyword id="KW-1160">Virus entry into host cell</keyword>
<organismHost>
    <name type="scientific">Equus caballus</name>
    <name type="common">Horse</name>
    <dbReference type="NCBI Taxonomy" id="9796"/>
</organismHost>
<proteinExistence type="inferred from homology"/>
<name>GB_EHV4</name>
<gene>
    <name evidence="2" type="primary">gB</name>
</gene>
<accession>P17472</accession>
<sequence>MSKDSTSLGVRTIVIACLVLLGCCIVEAVPTTPSSQPSTPASTQSAKTVDQTLLPTETPDPLRLAVRESGILAEDGDFYTCPPPTGSTVVRIEPPRSCPKFDLGRNFTEGIAVIFKENIAPYKFRANVYYKDIVVTKVWKGYSHTSLSDRYNDRVPVSVEEIFTLIDSKGKCSSKAEYLRDNIMHHAYHDDEDEVELDLVPSKFATPGARAWQTTNDTTSYVGWMPWRHYTSTSVNCIVEEVEARSVYPYDSFALSTGDIVYTSPFYGLRSAAQLEHNSYAQERFRQVEGYQPRDLDSKLQAGEPVTKNFITTPHVTVSWNWTEKKIEACTLTKWKEVDELVRDEFRGSYRFTIRSISSTFISNTTQFKLEDAPLTDCVSKEAKDAIDSIYRKQYESTHVFSGDVEFYLARGGFLIAFRPMISNELARLYLNELVRSNRTYDLKNLLNPNANHNTNRTRRSLLSIPEPTPTQESLHREQILHRLHKRAVEAANSTNSSNVTAKQLELIKTTSSIEFAMLQFAYDHIQSHVNEMLSRIATAWCTLQNKERTLWNEMVKVNPSAIVSATLDERVAARVLGDVIAITHCVKIEGNVYLQNSMRSSDSNTCYSRPPVTFTITKNANSRGTIEGQLGEENEVYTERKLIEPCAINQKRYFKFGKEYVYYENYTYVRKVPPTEIEVISTYVELNLTLLEDREFLPLEVYTRAELEDTGLLDYSEIQRRNQLHALRFYDIDSVVNVDNTAVIMQGIATFFKGLGKVGEAVGTLVLGAAGAVVSTVSGIASFINNPFGGLAIGLLVIAGLVAAFFAYRYVMQLRSNPMKALYPITTRSLKNKAKASYGQNDDDDTSDFDEAKLEEAREMIKYMSMVSALEKQEKKAMKKNKGVGLIASNVSKLALRRRGPKYTRLREDDPMESEKMV</sequence>
<comment type="function">
    <text evidence="2">Envelope glycoprotein that forms spikes at the surface of virion envelope. Essential for the initial attachment to heparan sulfate moieties of the host cell surface proteoglycans. Involved in fusion of viral and cellular membranes leading to virus entry into the host cell. Following initial binding to its host receptors, membrane fusion is mediated by the fusion machinery composed at least of gB and the heterodimer gH/gL. May be involved in the fusion between the virion envelope and the outer nuclear membrane during virion egress.</text>
</comment>
<comment type="subunit">
    <text evidence="2">Homotrimer; disulfide-linked. Binds to heparan sulfate proteoglycans. Interacts with gH/gL heterodimer.</text>
</comment>
<comment type="subcellular location">
    <subcellularLocation>
        <location evidence="2">Virion membrane</location>
        <topology evidence="2">Single-pass type I membrane protein</topology>
    </subcellularLocation>
    <subcellularLocation>
        <location evidence="2">Host cell membrane</location>
        <topology evidence="2">Single-pass type I membrane protein</topology>
    </subcellularLocation>
    <subcellularLocation>
        <location evidence="2">Host endosome membrane</location>
        <topology evidence="2">Single-pass type I membrane protein</topology>
    </subcellularLocation>
    <subcellularLocation>
        <location evidence="2">Host Golgi apparatus membrane</location>
        <topology evidence="2">Single-pass type I membrane protein</topology>
    </subcellularLocation>
    <text evidence="2">During virion morphogenesis, this protein probably accumulates in the endosomes and trans-Golgi where secondary envelopment occurs. It is probably transported to the cell surface from where it is endocytosed and directed to the trans-Golgi network (TGN).</text>
</comment>
<comment type="PTM">
    <text evidence="4">A proteolytic cleavage by host furin generates two subunits that remain linked by disulfide bonds.</text>
</comment>
<comment type="similarity">
    <text evidence="2">Belongs to the herpesviridae glycoprotein B family.</text>
</comment>
<comment type="sequence caution" evidence="4">
    <conflict type="erroneous initiation">
        <sequence resource="EMBL-CDS" id="AAA46106"/>
    </conflict>
</comment>
<dbReference type="EMBL" id="M26171">
    <property type="protein sequence ID" value="AAA46106.1"/>
    <property type="status" value="ALT_INIT"/>
    <property type="molecule type" value="Genomic_DNA"/>
</dbReference>
<dbReference type="PIR" id="A31880">
    <property type="entry name" value="VGBEQH"/>
</dbReference>
<dbReference type="SMR" id="P17472"/>
<dbReference type="GlyCosmos" id="P17472">
    <property type="glycosylation" value="11 sites, No reported glycans"/>
</dbReference>
<dbReference type="GO" id="GO:0044175">
    <property type="term" value="C:host cell endosome membrane"/>
    <property type="evidence" value="ECO:0007669"/>
    <property type="project" value="UniProtKB-SubCell"/>
</dbReference>
<dbReference type="GO" id="GO:0044178">
    <property type="term" value="C:host cell Golgi membrane"/>
    <property type="evidence" value="ECO:0007669"/>
    <property type="project" value="UniProtKB-SubCell"/>
</dbReference>
<dbReference type="GO" id="GO:0020002">
    <property type="term" value="C:host cell plasma membrane"/>
    <property type="evidence" value="ECO:0007669"/>
    <property type="project" value="UniProtKB-SubCell"/>
</dbReference>
<dbReference type="GO" id="GO:0016020">
    <property type="term" value="C:membrane"/>
    <property type="evidence" value="ECO:0007669"/>
    <property type="project" value="UniProtKB-KW"/>
</dbReference>
<dbReference type="GO" id="GO:0019031">
    <property type="term" value="C:viral envelope"/>
    <property type="evidence" value="ECO:0007669"/>
    <property type="project" value="UniProtKB-KW"/>
</dbReference>
<dbReference type="GO" id="GO:0055036">
    <property type="term" value="C:virion membrane"/>
    <property type="evidence" value="ECO:0007669"/>
    <property type="project" value="UniProtKB-SubCell"/>
</dbReference>
<dbReference type="GO" id="GO:0046718">
    <property type="term" value="P:symbiont entry into host cell"/>
    <property type="evidence" value="ECO:0007669"/>
    <property type="project" value="UniProtKB-KW"/>
</dbReference>
<dbReference type="GO" id="GO:0019062">
    <property type="term" value="P:virion attachment to host cell"/>
    <property type="evidence" value="ECO:0007669"/>
    <property type="project" value="UniProtKB-KW"/>
</dbReference>
<dbReference type="Gene3D" id="1.20.5.1890">
    <property type="match status" value="1"/>
</dbReference>
<dbReference type="Gene3D" id="2.30.29.100">
    <property type="match status" value="1"/>
</dbReference>
<dbReference type="Gene3D" id="2.30.30.1230">
    <property type="match status" value="1"/>
</dbReference>
<dbReference type="Gene3D" id="6.10.250.3280">
    <property type="match status" value="1"/>
</dbReference>
<dbReference type="HAMAP" id="MF_04032">
    <property type="entry name" value="HSV_GB"/>
    <property type="match status" value="1"/>
</dbReference>
<dbReference type="InterPro" id="IPR035377">
    <property type="entry name" value="Glycoprot_B_PH1"/>
</dbReference>
<dbReference type="InterPro" id="IPR035381">
    <property type="entry name" value="Glycoprot_B_PH2"/>
</dbReference>
<dbReference type="InterPro" id="IPR038631">
    <property type="entry name" value="Glycoprot_B_PH2_sf"/>
</dbReference>
<dbReference type="InterPro" id="IPR055341">
    <property type="entry name" value="Glycoprotein_B_ecto_C"/>
</dbReference>
<dbReference type="InterPro" id="IPR000234">
    <property type="entry name" value="Herpes_Glycoprot_B"/>
</dbReference>
<dbReference type="Pfam" id="PF17416">
    <property type="entry name" value="Glycoprot_B_PH1"/>
    <property type="match status" value="1"/>
</dbReference>
<dbReference type="Pfam" id="PF17417">
    <property type="entry name" value="Glycoprot_B_PH2"/>
    <property type="match status" value="1"/>
</dbReference>
<dbReference type="Pfam" id="PF00606">
    <property type="entry name" value="Glycoprotein_B"/>
    <property type="match status" value="1"/>
</dbReference>
<dbReference type="SUPFAM" id="SSF161008">
    <property type="entry name" value="Viral glycoprotein ectodomain-like"/>
    <property type="match status" value="1"/>
</dbReference>
<feature type="signal peptide" evidence="2">
    <location>
        <begin position="1"/>
        <end position="28"/>
    </location>
</feature>
<feature type="chain" id="PRO_0000038175" description="Envelope glycoprotein B" evidence="2">
    <location>
        <begin position="29"/>
        <end position="919"/>
    </location>
</feature>
<feature type="topological domain" description="Virion surface" evidence="2">
    <location>
        <begin position="29"/>
        <end position="788"/>
    </location>
</feature>
<feature type="transmembrane region" description="Helical" evidence="2">
    <location>
        <begin position="789"/>
        <end position="809"/>
    </location>
</feature>
<feature type="topological domain" description="Intravirion" evidence="2">
    <location>
        <begin position="810"/>
        <end position="919"/>
    </location>
</feature>
<feature type="region of interest" description="Involved in fusion and/or binding to host membrane" evidence="2">
    <location>
        <begin position="138"/>
        <end position="144"/>
    </location>
</feature>
<feature type="region of interest" description="Involved in fusion and/or binding to host membrane" evidence="2">
    <location>
        <begin position="223"/>
        <end position="231"/>
    </location>
</feature>
<feature type="region of interest" description="Hydrophobic membrane proximal region" evidence="2">
    <location>
        <begin position="733"/>
        <end position="786"/>
    </location>
</feature>
<feature type="region of interest" description="Hydrophobic membrane proximal region">
    <location>
        <begin position="765"/>
        <end position="785"/>
    </location>
</feature>
<feature type="region of interest" description="Disordered" evidence="3">
    <location>
        <begin position="900"/>
        <end position="919"/>
    </location>
</feature>
<feature type="short sequence motif" description="Golgi targeting" evidence="2">
    <location>
        <begin position="864"/>
        <end position="867"/>
    </location>
</feature>
<feature type="short sequence motif" description="Internalization motif" evidence="2">
    <location>
        <begin position="904"/>
        <end position="907"/>
    </location>
</feature>
<feature type="compositionally biased region" description="Basic and acidic residues" evidence="3">
    <location>
        <begin position="906"/>
        <end position="919"/>
    </location>
</feature>
<feature type="site" description="Cleavage; by host furin" evidence="1">
    <location>
        <begin position="460"/>
        <end position="461"/>
    </location>
</feature>
<feature type="glycosylation site" description="N-linked (GlcNAc...) asparagine; by host" evidence="2">
    <location>
        <position position="106"/>
    </location>
</feature>
<feature type="glycosylation site" description="N-linked (GlcNAc...) asparagine; by host" evidence="2">
    <location>
        <position position="216"/>
    </location>
</feature>
<feature type="glycosylation site" description="N-linked (GlcNAc...) asparagine; by host" evidence="2">
    <location>
        <position position="321"/>
    </location>
</feature>
<feature type="glycosylation site" description="N-linked (GlcNAc...) asparagine; by host" evidence="2">
    <location>
        <position position="364"/>
    </location>
</feature>
<feature type="glycosylation site" description="N-linked (GlcNAc...) asparagine; by host" evidence="2">
    <location>
        <position position="438"/>
    </location>
</feature>
<feature type="glycosylation site" description="N-linked (GlcNAc...) asparagine; by host" evidence="2">
    <location>
        <position position="456"/>
    </location>
</feature>
<feature type="glycosylation site" description="N-linked (GlcNAc...) asparagine; by host" evidence="2">
    <location>
        <position position="493"/>
    </location>
</feature>
<feature type="glycosylation site" description="N-linked (GlcNAc...) asparagine; by host" evidence="2">
    <location>
        <position position="496"/>
    </location>
</feature>
<feature type="glycosylation site" description="N-linked (GlcNAc...) asparagine; by host" evidence="2">
    <location>
        <position position="499"/>
    </location>
</feature>
<feature type="glycosylation site" description="N-linked (GlcNAc...) asparagine; by host" evidence="2">
    <location>
        <position position="666"/>
    </location>
</feature>
<feature type="glycosylation site" description="N-linked (GlcNAc...) asparagine; by host" evidence="2">
    <location>
        <position position="688"/>
    </location>
</feature>
<feature type="disulfide bond" evidence="2">
    <location>
        <begin position="81"/>
        <end position="586"/>
    </location>
</feature>
<feature type="disulfide bond" evidence="2">
    <location>
        <begin position="98"/>
        <end position="542"/>
    </location>
</feature>
<feature type="disulfide bond" evidence="2">
    <location>
        <begin position="172"/>
        <end position="237"/>
    </location>
</feature>
<feature type="disulfide bond" evidence="2">
    <location>
        <begin position="330"/>
        <end position="378"/>
    </location>
</feature>
<feature type="disulfide bond" evidence="2">
    <location>
        <begin position="607"/>
        <end position="647"/>
    </location>
</feature>
<reference key="1">
    <citation type="journal article" date="1989" name="J. Virol.">
        <title>Identification and nucleotide sequence of the glycoprotein gB gene of equine herpesvirus 4.</title>
        <authorList>
            <person name="Riggio M.P."/>
            <person name="Cullinane A.A."/>
            <person name="Onions D.E."/>
        </authorList>
    </citation>
    <scope>NUCLEOTIDE SEQUENCE [GENOMIC DNA]</scope>
</reference>
<evidence type="ECO:0000255" key="1"/>
<evidence type="ECO:0000255" key="2">
    <source>
        <dbReference type="HAMAP-Rule" id="MF_04032"/>
    </source>
</evidence>
<evidence type="ECO:0000256" key="3">
    <source>
        <dbReference type="SAM" id="MobiDB-lite"/>
    </source>
</evidence>
<evidence type="ECO:0000305" key="4"/>
<organism>
    <name type="scientific">Equine herpesvirus 4 (strain 1942)</name>
    <name type="common">EHV-4</name>
    <name type="synonym">Equine rhinopneumonitis virus</name>
    <dbReference type="NCBI Taxonomy" id="10333"/>
    <lineage>
        <taxon>Viruses</taxon>
        <taxon>Duplodnaviria</taxon>
        <taxon>Heunggongvirae</taxon>
        <taxon>Peploviricota</taxon>
        <taxon>Herviviricetes</taxon>
        <taxon>Herpesvirales</taxon>
        <taxon>Orthoherpesviridae</taxon>
        <taxon>Alphaherpesvirinae</taxon>
        <taxon>Varicellovirus</taxon>
        <taxon>Varicellovirus equidalpha4</taxon>
        <taxon>Equid alphaherpesvirus 4</taxon>
    </lineage>
</organism>
<protein>
    <recommendedName>
        <fullName evidence="2">Envelope glycoprotein B</fullName>
        <shortName evidence="2">gB</shortName>
    </recommendedName>
</protein>